<proteinExistence type="inferred from homology"/>
<dbReference type="EMBL" id="CP000880">
    <property type="protein sequence ID" value="ABX24051.1"/>
    <property type="molecule type" value="Genomic_DNA"/>
</dbReference>
<dbReference type="SMR" id="A9MNW9"/>
<dbReference type="STRING" id="41514.SARI_04268"/>
<dbReference type="KEGG" id="ses:SARI_04268"/>
<dbReference type="HOGENOM" id="CLU_018816_15_2_6"/>
<dbReference type="Proteomes" id="UP000002084">
    <property type="component" value="Chromosome"/>
</dbReference>
<dbReference type="GO" id="GO:0005886">
    <property type="term" value="C:plasma membrane"/>
    <property type="evidence" value="ECO:0007669"/>
    <property type="project" value="UniProtKB-SubCell"/>
</dbReference>
<dbReference type="GO" id="GO:0022857">
    <property type="term" value="F:transmembrane transporter activity"/>
    <property type="evidence" value="ECO:0007669"/>
    <property type="project" value="UniProtKB-UniRule"/>
</dbReference>
<dbReference type="FunFam" id="2.40.30.170:FF:000002">
    <property type="entry name" value="p-hydroxybenzoic acid efflux pump subunit AaeA"/>
    <property type="match status" value="1"/>
</dbReference>
<dbReference type="Gene3D" id="2.40.30.170">
    <property type="match status" value="1"/>
</dbReference>
<dbReference type="Gene3D" id="2.40.50.100">
    <property type="match status" value="1"/>
</dbReference>
<dbReference type="HAMAP" id="MF_01544">
    <property type="entry name" value="AaeA"/>
    <property type="match status" value="1"/>
</dbReference>
<dbReference type="InterPro" id="IPR043602">
    <property type="entry name" value="CusB-like_dom_1"/>
</dbReference>
<dbReference type="InterPro" id="IPR032317">
    <property type="entry name" value="CusB_D23"/>
</dbReference>
<dbReference type="InterPro" id="IPR050393">
    <property type="entry name" value="MFP_Efflux_Pump"/>
</dbReference>
<dbReference type="InterPro" id="IPR022871">
    <property type="entry name" value="PHBA_efflux_pump_AaeA"/>
</dbReference>
<dbReference type="InterPro" id="IPR006143">
    <property type="entry name" value="RND_pump_MFP"/>
</dbReference>
<dbReference type="NCBIfam" id="NF007850">
    <property type="entry name" value="PRK10559.1"/>
    <property type="match status" value="1"/>
</dbReference>
<dbReference type="NCBIfam" id="TIGR01730">
    <property type="entry name" value="RND_mfp"/>
    <property type="match status" value="1"/>
</dbReference>
<dbReference type="PANTHER" id="PTHR30367:SF12">
    <property type="entry name" value="P-HYDROXYBENZOIC ACID EFFLUX PUMP SUBUNIT AAEA"/>
    <property type="match status" value="1"/>
</dbReference>
<dbReference type="PANTHER" id="PTHR30367">
    <property type="entry name" value="P-HYDROXYBENZOIC ACID EFFLUX PUMP SUBUNIT AAEA-RELATED"/>
    <property type="match status" value="1"/>
</dbReference>
<dbReference type="Pfam" id="PF00529">
    <property type="entry name" value="CusB_dom_1"/>
    <property type="match status" value="1"/>
</dbReference>
<dbReference type="Pfam" id="PF16576">
    <property type="entry name" value="HlyD_D23"/>
    <property type="match status" value="1"/>
</dbReference>
<dbReference type="SUPFAM" id="SSF111369">
    <property type="entry name" value="HlyD-like secretion proteins"/>
    <property type="match status" value="1"/>
</dbReference>
<name>AAEA_SALAR</name>
<sequence length="310" mass="34575">MKTLTRKLSRTAITLVLVILAFIAIFRAWVYYTESPWTRDARFSADVVAIAPDVAGLITHVNVHDNQLVQKDQVLFTIDQPRYQKALAEAEADVAYYQVLAQEKRQEAGRRNRLGVQAMSREEIDQANNVLQTVLHQLAKAQATRDLAKLDLERTVIRAPADGWVTNLNVYAGEFITRGSTAVALVKKNSFYVQAYMEETKLEGVRPGYRAEITPLGSNRVLKGTVDSVAAGVTNTSSTSDAKGMATIDSNLEWVRLAQRVPVRIRLDEQQGNLWPAGTTATVVITGKQDRDASQDSFFRKLAHRLREFG</sequence>
<protein>
    <recommendedName>
        <fullName evidence="1">p-hydroxybenzoic acid efflux pump subunit AaeA</fullName>
        <shortName evidence="1">pHBA efflux pump protein A</shortName>
    </recommendedName>
</protein>
<feature type="chain" id="PRO_1000087662" description="p-hydroxybenzoic acid efflux pump subunit AaeA">
    <location>
        <begin position="1"/>
        <end position="310"/>
    </location>
</feature>
<feature type="transmembrane region" description="Helical" evidence="1">
    <location>
        <begin position="12"/>
        <end position="32"/>
    </location>
</feature>
<comment type="function">
    <text evidence="1">Forms an efflux pump with AaeB.</text>
</comment>
<comment type="subcellular location">
    <subcellularLocation>
        <location evidence="1">Cell inner membrane</location>
        <topology evidence="1">Single-pass membrane protein</topology>
    </subcellularLocation>
</comment>
<comment type="similarity">
    <text evidence="1">Belongs to the membrane fusion protein (MFP) (TC 8.A.1) family.</text>
</comment>
<keyword id="KW-0997">Cell inner membrane</keyword>
<keyword id="KW-1003">Cell membrane</keyword>
<keyword id="KW-0472">Membrane</keyword>
<keyword id="KW-1185">Reference proteome</keyword>
<keyword id="KW-0812">Transmembrane</keyword>
<keyword id="KW-1133">Transmembrane helix</keyword>
<keyword id="KW-0813">Transport</keyword>
<organism>
    <name type="scientific">Salmonella arizonae (strain ATCC BAA-731 / CDC346-86 / RSK2980)</name>
    <dbReference type="NCBI Taxonomy" id="41514"/>
    <lineage>
        <taxon>Bacteria</taxon>
        <taxon>Pseudomonadati</taxon>
        <taxon>Pseudomonadota</taxon>
        <taxon>Gammaproteobacteria</taxon>
        <taxon>Enterobacterales</taxon>
        <taxon>Enterobacteriaceae</taxon>
        <taxon>Salmonella</taxon>
    </lineage>
</organism>
<evidence type="ECO:0000255" key="1">
    <source>
        <dbReference type="HAMAP-Rule" id="MF_01544"/>
    </source>
</evidence>
<reference key="1">
    <citation type="submission" date="2007-11" db="EMBL/GenBank/DDBJ databases">
        <authorList>
            <consortium name="The Salmonella enterica serovar Arizonae Genome Sequencing Project"/>
            <person name="McClelland M."/>
            <person name="Sanderson E.K."/>
            <person name="Porwollik S."/>
            <person name="Spieth J."/>
            <person name="Clifton W.S."/>
            <person name="Fulton R."/>
            <person name="Chunyan W."/>
            <person name="Wollam A."/>
            <person name="Shah N."/>
            <person name="Pepin K."/>
            <person name="Bhonagiri V."/>
            <person name="Nash W."/>
            <person name="Johnson M."/>
            <person name="Thiruvilangam P."/>
            <person name="Wilson R."/>
        </authorList>
    </citation>
    <scope>NUCLEOTIDE SEQUENCE [LARGE SCALE GENOMIC DNA]</scope>
    <source>
        <strain>ATCC BAA-731 / CDC346-86 / RSK2980</strain>
    </source>
</reference>
<gene>
    <name evidence="1" type="primary">aaeA</name>
    <name type="ordered locus">SARI_04268</name>
</gene>
<accession>A9MNW9</accession>